<gene>
    <name evidence="1" type="primary">aroC</name>
    <name type="ordered locus">KPK_1420</name>
</gene>
<sequence length="361" mass="39051">MAGNTIGQLFRVTTFGESHGLALGCIVDGVPPGIPLTEADLQHDLDRRRPGTSRYTTQRREPDQVKILSGVFEGVTTGTSIGLLIENTDQRSQDYGAIKDLFRPGHADYTYEQKYGLRDYRGGGRSSARETAMRVAAGAIAKKYLAAKFGIVIRGCLTQMGDIPLAIKDWNQVEQNPFFCPDPDKIDALDELMRGLKKEGDSIGAKVTVVADGVPPGLGEPVFDRLDADIAHALMSINAVKGVEIGDGFEVVKLRGSENRDEITKDGFQSNHAGGILGGISSGQQIVANIALKPTSSITVPGHTINRFGEEVEMITKGRHDPCVGIRAVPIAEAMLAIVLMDHFMRQRAQNGDVTTTIPRW</sequence>
<organism>
    <name type="scientific">Klebsiella pneumoniae (strain 342)</name>
    <dbReference type="NCBI Taxonomy" id="507522"/>
    <lineage>
        <taxon>Bacteria</taxon>
        <taxon>Pseudomonadati</taxon>
        <taxon>Pseudomonadota</taxon>
        <taxon>Gammaproteobacteria</taxon>
        <taxon>Enterobacterales</taxon>
        <taxon>Enterobacteriaceae</taxon>
        <taxon>Klebsiella/Raoultella group</taxon>
        <taxon>Klebsiella</taxon>
        <taxon>Klebsiella pneumoniae complex</taxon>
    </lineage>
</organism>
<reference key="1">
    <citation type="journal article" date="2008" name="PLoS Genet.">
        <title>Complete genome sequence of the N2-fixing broad host range endophyte Klebsiella pneumoniae 342 and virulence predictions verified in mice.</title>
        <authorList>
            <person name="Fouts D.E."/>
            <person name="Tyler H.L."/>
            <person name="DeBoy R.T."/>
            <person name="Daugherty S."/>
            <person name="Ren Q."/>
            <person name="Badger J.H."/>
            <person name="Durkin A.S."/>
            <person name="Huot H."/>
            <person name="Shrivastava S."/>
            <person name="Kothari S."/>
            <person name="Dodson R.J."/>
            <person name="Mohamoud Y."/>
            <person name="Khouri H."/>
            <person name="Roesch L.F.W."/>
            <person name="Krogfelt K.A."/>
            <person name="Struve C."/>
            <person name="Triplett E.W."/>
            <person name="Methe B.A."/>
        </authorList>
    </citation>
    <scope>NUCLEOTIDE SEQUENCE [LARGE SCALE GENOMIC DNA]</scope>
    <source>
        <strain>342</strain>
    </source>
</reference>
<dbReference type="EC" id="4.2.3.5" evidence="1"/>
<dbReference type="EMBL" id="CP000964">
    <property type="protein sequence ID" value="ACI07293.1"/>
    <property type="molecule type" value="Genomic_DNA"/>
</dbReference>
<dbReference type="SMR" id="B5XVW6"/>
<dbReference type="KEGG" id="kpe:KPK_1420"/>
<dbReference type="HOGENOM" id="CLU_034547_0_2_6"/>
<dbReference type="UniPathway" id="UPA00053">
    <property type="reaction ID" value="UER00090"/>
</dbReference>
<dbReference type="Proteomes" id="UP000001734">
    <property type="component" value="Chromosome"/>
</dbReference>
<dbReference type="GO" id="GO:0005829">
    <property type="term" value="C:cytosol"/>
    <property type="evidence" value="ECO:0007669"/>
    <property type="project" value="TreeGrafter"/>
</dbReference>
<dbReference type="GO" id="GO:0004107">
    <property type="term" value="F:chorismate synthase activity"/>
    <property type="evidence" value="ECO:0007669"/>
    <property type="project" value="UniProtKB-UniRule"/>
</dbReference>
<dbReference type="GO" id="GO:0010181">
    <property type="term" value="F:FMN binding"/>
    <property type="evidence" value="ECO:0007669"/>
    <property type="project" value="TreeGrafter"/>
</dbReference>
<dbReference type="GO" id="GO:0008652">
    <property type="term" value="P:amino acid biosynthetic process"/>
    <property type="evidence" value="ECO:0007669"/>
    <property type="project" value="UniProtKB-KW"/>
</dbReference>
<dbReference type="GO" id="GO:0009073">
    <property type="term" value="P:aromatic amino acid family biosynthetic process"/>
    <property type="evidence" value="ECO:0007669"/>
    <property type="project" value="UniProtKB-KW"/>
</dbReference>
<dbReference type="GO" id="GO:0009423">
    <property type="term" value="P:chorismate biosynthetic process"/>
    <property type="evidence" value="ECO:0007669"/>
    <property type="project" value="UniProtKB-UniRule"/>
</dbReference>
<dbReference type="CDD" id="cd07304">
    <property type="entry name" value="Chorismate_synthase"/>
    <property type="match status" value="1"/>
</dbReference>
<dbReference type="FunFam" id="3.60.150.10:FF:000001">
    <property type="entry name" value="Chorismate synthase"/>
    <property type="match status" value="1"/>
</dbReference>
<dbReference type="Gene3D" id="3.60.150.10">
    <property type="entry name" value="Chorismate synthase AroC"/>
    <property type="match status" value="1"/>
</dbReference>
<dbReference type="HAMAP" id="MF_00300">
    <property type="entry name" value="Chorismate_synth"/>
    <property type="match status" value="1"/>
</dbReference>
<dbReference type="InterPro" id="IPR000453">
    <property type="entry name" value="Chorismate_synth"/>
</dbReference>
<dbReference type="InterPro" id="IPR035904">
    <property type="entry name" value="Chorismate_synth_AroC_sf"/>
</dbReference>
<dbReference type="InterPro" id="IPR020541">
    <property type="entry name" value="Chorismate_synthase_CS"/>
</dbReference>
<dbReference type="NCBIfam" id="TIGR00033">
    <property type="entry name" value="aroC"/>
    <property type="match status" value="1"/>
</dbReference>
<dbReference type="NCBIfam" id="NF003793">
    <property type="entry name" value="PRK05382.1"/>
    <property type="match status" value="1"/>
</dbReference>
<dbReference type="PANTHER" id="PTHR21085">
    <property type="entry name" value="CHORISMATE SYNTHASE"/>
    <property type="match status" value="1"/>
</dbReference>
<dbReference type="PANTHER" id="PTHR21085:SF0">
    <property type="entry name" value="CHORISMATE SYNTHASE"/>
    <property type="match status" value="1"/>
</dbReference>
<dbReference type="Pfam" id="PF01264">
    <property type="entry name" value="Chorismate_synt"/>
    <property type="match status" value="1"/>
</dbReference>
<dbReference type="PIRSF" id="PIRSF001456">
    <property type="entry name" value="Chorismate_synth"/>
    <property type="match status" value="1"/>
</dbReference>
<dbReference type="SUPFAM" id="SSF103263">
    <property type="entry name" value="Chorismate synthase, AroC"/>
    <property type="match status" value="1"/>
</dbReference>
<dbReference type="PROSITE" id="PS00787">
    <property type="entry name" value="CHORISMATE_SYNTHASE_1"/>
    <property type="match status" value="1"/>
</dbReference>
<dbReference type="PROSITE" id="PS00788">
    <property type="entry name" value="CHORISMATE_SYNTHASE_2"/>
    <property type="match status" value="1"/>
</dbReference>
<dbReference type="PROSITE" id="PS00789">
    <property type="entry name" value="CHORISMATE_SYNTHASE_3"/>
    <property type="match status" value="1"/>
</dbReference>
<proteinExistence type="inferred from homology"/>
<accession>B5XVW6</accession>
<feature type="chain" id="PRO_1000115359" description="Chorismate synthase">
    <location>
        <begin position="1"/>
        <end position="361"/>
    </location>
</feature>
<feature type="binding site" evidence="1">
    <location>
        <position position="48"/>
    </location>
    <ligand>
        <name>NADP(+)</name>
        <dbReference type="ChEBI" id="CHEBI:58349"/>
    </ligand>
</feature>
<feature type="binding site" evidence="1">
    <location>
        <position position="54"/>
    </location>
    <ligand>
        <name>NADP(+)</name>
        <dbReference type="ChEBI" id="CHEBI:58349"/>
    </ligand>
</feature>
<feature type="binding site" evidence="1">
    <location>
        <begin position="125"/>
        <end position="127"/>
    </location>
    <ligand>
        <name>FMN</name>
        <dbReference type="ChEBI" id="CHEBI:58210"/>
    </ligand>
</feature>
<feature type="binding site" evidence="1">
    <location>
        <begin position="238"/>
        <end position="239"/>
    </location>
    <ligand>
        <name>FMN</name>
        <dbReference type="ChEBI" id="CHEBI:58210"/>
    </ligand>
</feature>
<feature type="binding site" evidence="1">
    <location>
        <position position="278"/>
    </location>
    <ligand>
        <name>FMN</name>
        <dbReference type="ChEBI" id="CHEBI:58210"/>
    </ligand>
</feature>
<feature type="binding site" evidence="1">
    <location>
        <begin position="293"/>
        <end position="297"/>
    </location>
    <ligand>
        <name>FMN</name>
        <dbReference type="ChEBI" id="CHEBI:58210"/>
    </ligand>
</feature>
<feature type="binding site" evidence="1">
    <location>
        <position position="319"/>
    </location>
    <ligand>
        <name>FMN</name>
        <dbReference type="ChEBI" id="CHEBI:58210"/>
    </ligand>
</feature>
<evidence type="ECO:0000255" key="1">
    <source>
        <dbReference type="HAMAP-Rule" id="MF_00300"/>
    </source>
</evidence>
<comment type="function">
    <text evidence="1">Catalyzes the anti-1,4-elimination of the C-3 phosphate and the C-6 proR hydrogen from 5-enolpyruvylshikimate-3-phosphate (EPSP) to yield chorismate, which is the branch point compound that serves as the starting substrate for the three terminal pathways of aromatic amino acid biosynthesis. This reaction introduces a second double bond into the aromatic ring system.</text>
</comment>
<comment type="catalytic activity">
    <reaction evidence="1">
        <text>5-O-(1-carboxyvinyl)-3-phosphoshikimate = chorismate + phosphate</text>
        <dbReference type="Rhea" id="RHEA:21020"/>
        <dbReference type="ChEBI" id="CHEBI:29748"/>
        <dbReference type="ChEBI" id="CHEBI:43474"/>
        <dbReference type="ChEBI" id="CHEBI:57701"/>
        <dbReference type="EC" id="4.2.3.5"/>
    </reaction>
</comment>
<comment type="cofactor">
    <cofactor evidence="1">
        <name>FMNH2</name>
        <dbReference type="ChEBI" id="CHEBI:57618"/>
    </cofactor>
    <text evidence="1">Reduced FMN (FMNH(2)).</text>
</comment>
<comment type="pathway">
    <text evidence="1">Metabolic intermediate biosynthesis; chorismate biosynthesis; chorismate from D-erythrose 4-phosphate and phosphoenolpyruvate: step 7/7.</text>
</comment>
<comment type="subunit">
    <text evidence="1">Homotetramer.</text>
</comment>
<comment type="similarity">
    <text evidence="1">Belongs to the chorismate synthase family.</text>
</comment>
<protein>
    <recommendedName>
        <fullName evidence="1">Chorismate synthase</fullName>
        <shortName evidence="1">CS</shortName>
        <ecNumber evidence="1">4.2.3.5</ecNumber>
    </recommendedName>
    <alternativeName>
        <fullName evidence="1">5-enolpyruvylshikimate-3-phosphate phospholyase</fullName>
    </alternativeName>
</protein>
<keyword id="KW-0028">Amino-acid biosynthesis</keyword>
<keyword id="KW-0057">Aromatic amino acid biosynthesis</keyword>
<keyword id="KW-0274">FAD</keyword>
<keyword id="KW-0285">Flavoprotein</keyword>
<keyword id="KW-0288">FMN</keyword>
<keyword id="KW-0456">Lyase</keyword>
<keyword id="KW-0521">NADP</keyword>
<name>AROC_KLEP3</name>